<feature type="chain" id="PRO_0000206791" description="3',5'-cyclic-nucleotide phosphodiesterase 1">
    <location>
        <begin position="1"/>
        <end position="369"/>
    </location>
</feature>
<feature type="sequence conflict" description="In Ref. 1; AAA34896." evidence="2" ref="1">
    <original>L</original>
    <variation>F</variation>
    <location>
        <position position="94"/>
    </location>
</feature>
<feature type="strand" evidence="3">
    <location>
        <begin position="4"/>
        <end position="10"/>
    </location>
</feature>
<feature type="strand" evidence="3">
    <location>
        <begin position="14"/>
        <end position="16"/>
    </location>
</feature>
<feature type="strand" evidence="3">
    <location>
        <begin position="18"/>
        <end position="29"/>
    </location>
</feature>
<feature type="strand" evidence="3">
    <location>
        <begin position="35"/>
        <end position="39"/>
    </location>
</feature>
<feature type="helix" evidence="3">
    <location>
        <begin position="44"/>
        <end position="53"/>
    </location>
</feature>
<feature type="strand" evidence="3">
    <location>
        <begin position="64"/>
        <end position="66"/>
    </location>
</feature>
<feature type="strand" evidence="3">
    <location>
        <begin position="69"/>
        <end position="75"/>
    </location>
</feature>
<feature type="helix" evidence="3">
    <location>
        <begin position="76"/>
        <end position="79"/>
    </location>
</feature>
<feature type="strand" evidence="3">
    <location>
        <begin position="86"/>
        <end position="90"/>
    </location>
</feature>
<feature type="helix" evidence="3">
    <location>
        <begin position="92"/>
        <end position="96"/>
    </location>
</feature>
<feature type="turn" evidence="3">
    <location>
        <begin position="97"/>
        <end position="100"/>
    </location>
</feature>
<feature type="helix" evidence="3">
    <location>
        <begin position="102"/>
        <end position="107"/>
    </location>
</feature>
<feature type="helix" evidence="3">
    <location>
        <begin position="110"/>
        <end position="119"/>
    </location>
</feature>
<feature type="strand" evidence="3">
    <location>
        <begin position="121"/>
        <end position="125"/>
    </location>
</feature>
<feature type="helix" evidence="3">
    <location>
        <begin position="131"/>
        <end position="133"/>
    </location>
</feature>
<feature type="helix" evidence="3">
    <location>
        <begin position="135"/>
        <end position="140"/>
    </location>
</feature>
<feature type="helix" evidence="3">
    <location>
        <begin position="141"/>
        <end position="145"/>
    </location>
</feature>
<feature type="strand" evidence="3">
    <location>
        <begin position="153"/>
        <end position="157"/>
    </location>
</feature>
<feature type="helix" evidence="3">
    <location>
        <begin position="159"/>
        <end position="168"/>
    </location>
</feature>
<feature type="strand" evidence="3">
    <location>
        <begin position="170"/>
        <end position="175"/>
    </location>
</feature>
<feature type="helix" evidence="3">
    <location>
        <begin position="178"/>
        <end position="180"/>
    </location>
</feature>
<feature type="strand" evidence="3">
    <location>
        <begin position="186"/>
        <end position="190"/>
    </location>
</feature>
<feature type="strand" evidence="3">
    <location>
        <begin position="200"/>
        <end position="215"/>
    </location>
</feature>
<feature type="turn" evidence="3">
    <location>
        <begin position="217"/>
        <end position="219"/>
    </location>
</feature>
<feature type="strand" evidence="3">
    <location>
        <begin position="222"/>
        <end position="232"/>
    </location>
</feature>
<feature type="turn" evidence="3">
    <location>
        <begin position="233"/>
        <end position="235"/>
    </location>
</feature>
<feature type="strand" evidence="3">
    <location>
        <begin position="238"/>
        <end position="242"/>
    </location>
</feature>
<feature type="turn" evidence="3">
    <location>
        <begin position="250"/>
        <end position="252"/>
    </location>
</feature>
<feature type="helix" evidence="3">
    <location>
        <begin position="256"/>
        <end position="267"/>
    </location>
</feature>
<feature type="helix" evidence="3">
    <location>
        <begin position="270"/>
        <end position="272"/>
    </location>
</feature>
<feature type="strand" evidence="3">
    <location>
        <begin position="273"/>
        <end position="279"/>
    </location>
</feature>
<feature type="helix" evidence="3">
    <location>
        <begin position="288"/>
        <end position="291"/>
    </location>
</feature>
<feature type="helix" evidence="3">
    <location>
        <begin position="297"/>
        <end position="311"/>
    </location>
</feature>
<feature type="turn" evidence="3">
    <location>
        <begin position="314"/>
        <end position="319"/>
    </location>
</feature>
<feature type="strand" evidence="3">
    <location>
        <begin position="321"/>
        <end position="325"/>
    </location>
</feature>
<feature type="helix" evidence="3">
    <location>
        <begin position="336"/>
        <end position="350"/>
    </location>
</feature>
<feature type="strand" evidence="3">
    <location>
        <begin position="357"/>
        <end position="360"/>
    </location>
</feature>
<feature type="strand" evidence="3">
    <location>
        <begin position="365"/>
        <end position="368"/>
    </location>
</feature>
<comment type="function">
    <text>Controls the level of cAMP in yeast cells, together with the high-affinity cAMP phosphodiesterase (PDE2).</text>
</comment>
<comment type="catalytic activity">
    <reaction>
        <text>a nucleoside 3',5'-cyclic phosphate + H2O = a nucleoside 5'-phosphate + H(+)</text>
        <dbReference type="Rhea" id="RHEA:14653"/>
        <dbReference type="ChEBI" id="CHEBI:15377"/>
        <dbReference type="ChEBI" id="CHEBI:15378"/>
        <dbReference type="ChEBI" id="CHEBI:57867"/>
        <dbReference type="ChEBI" id="CHEBI:58464"/>
        <dbReference type="EC" id="3.1.4.17"/>
    </reaction>
</comment>
<comment type="miscellaneous">
    <text evidence="1">Present with 1400 molecules/cell in log phase SD medium.</text>
</comment>
<comment type="similarity">
    <text evidence="2">Belongs to the cyclic nucleotide phosphodiesterase class-II family.</text>
</comment>
<dbReference type="EC" id="3.1.4.17"/>
<dbReference type="EMBL" id="M17781">
    <property type="protein sequence ID" value="AAA34896.1"/>
    <property type="molecule type" value="Genomic_DNA"/>
</dbReference>
<dbReference type="EMBL" id="X94357">
    <property type="protein sequence ID" value="CAA64139.1"/>
    <property type="molecule type" value="Genomic_DNA"/>
</dbReference>
<dbReference type="EMBL" id="Z72770">
    <property type="protein sequence ID" value="CAA96968.1"/>
    <property type="molecule type" value="Genomic_DNA"/>
</dbReference>
<dbReference type="EMBL" id="BK006941">
    <property type="protein sequence ID" value="DAA07871.1"/>
    <property type="molecule type" value="Genomic_DNA"/>
</dbReference>
<dbReference type="PIR" id="S61613">
    <property type="entry name" value="ESBYPC"/>
</dbReference>
<dbReference type="RefSeq" id="NP_011266.1">
    <property type="nucleotide sequence ID" value="NM_001181114.1"/>
</dbReference>
<dbReference type="PDB" id="4OJV">
    <property type="method" value="X-ray"/>
    <property type="resolution" value="1.31 A"/>
    <property type="chains" value="A=1-369"/>
</dbReference>
<dbReference type="PDB" id="4OJX">
    <property type="method" value="X-ray"/>
    <property type="resolution" value="1.31 A"/>
    <property type="chains" value="A=1-369"/>
</dbReference>
<dbReference type="PDBsum" id="4OJV"/>
<dbReference type="PDBsum" id="4OJX"/>
<dbReference type="SMR" id="P22434"/>
<dbReference type="BioGRID" id="33031">
    <property type="interactions" value="85"/>
</dbReference>
<dbReference type="FunCoup" id="P22434">
    <property type="interactions" value="86"/>
</dbReference>
<dbReference type="STRING" id="4932.YGL248W"/>
<dbReference type="iPTMnet" id="P22434"/>
<dbReference type="PaxDb" id="4932-YGL248W"/>
<dbReference type="PeptideAtlas" id="P22434"/>
<dbReference type="EnsemblFungi" id="YGL248W_mRNA">
    <property type="protein sequence ID" value="YGL248W"/>
    <property type="gene ID" value="YGL248W"/>
</dbReference>
<dbReference type="GeneID" id="852644"/>
<dbReference type="KEGG" id="sce:YGL248W"/>
<dbReference type="AGR" id="SGD:S000003217"/>
<dbReference type="SGD" id="S000003217">
    <property type="gene designation" value="PDE1"/>
</dbReference>
<dbReference type="VEuPathDB" id="FungiDB:YGL248W"/>
<dbReference type="eggNOG" id="ENOG502RFKK">
    <property type="taxonomic scope" value="Eukaryota"/>
</dbReference>
<dbReference type="HOGENOM" id="CLU_016658_2_1_1"/>
<dbReference type="InParanoid" id="P22434"/>
<dbReference type="OMA" id="YYITHPH"/>
<dbReference type="OrthoDB" id="258495at2759"/>
<dbReference type="BioCyc" id="YEAST:YGL248W-MONOMER"/>
<dbReference type="BRENDA" id="3.1.4.17">
    <property type="organism ID" value="984"/>
</dbReference>
<dbReference type="BioGRID-ORCS" id="852644">
    <property type="hits" value="0 hits in 10 CRISPR screens"/>
</dbReference>
<dbReference type="EvolutionaryTrace" id="P22434"/>
<dbReference type="PRO" id="PR:P22434"/>
<dbReference type="Proteomes" id="UP000002311">
    <property type="component" value="Chromosome VII"/>
</dbReference>
<dbReference type="RNAct" id="P22434">
    <property type="molecule type" value="protein"/>
</dbReference>
<dbReference type="GO" id="GO:0004115">
    <property type="term" value="F:3',5'-cyclic-AMP phosphodiesterase activity"/>
    <property type="evidence" value="ECO:0000315"/>
    <property type="project" value="SGD"/>
</dbReference>
<dbReference type="GO" id="GO:0047555">
    <property type="term" value="F:3',5'-cyclic-GMP phosphodiesterase activity"/>
    <property type="evidence" value="ECO:0000318"/>
    <property type="project" value="GO_Central"/>
</dbReference>
<dbReference type="GO" id="GO:0007189">
    <property type="term" value="P:adenylate cyclase-activating G protein-coupled receptor signaling pathway"/>
    <property type="evidence" value="ECO:0000315"/>
    <property type="project" value="SGD"/>
</dbReference>
<dbReference type="GO" id="GO:0006198">
    <property type="term" value="P:cAMP catabolic process"/>
    <property type="evidence" value="ECO:0007669"/>
    <property type="project" value="InterPro"/>
</dbReference>
<dbReference type="GO" id="GO:1902660">
    <property type="term" value="P:negative regulation of glucose mediated signaling pathway"/>
    <property type="evidence" value="ECO:0000318"/>
    <property type="project" value="GO_Central"/>
</dbReference>
<dbReference type="CDD" id="cd07735">
    <property type="entry name" value="class_II_PDE_MBL-fold"/>
    <property type="match status" value="1"/>
</dbReference>
<dbReference type="FunFam" id="3.60.15.10:FF:000099">
    <property type="entry name" value="3',5'-cyclic-nucleotide phosphodiesterase"/>
    <property type="match status" value="1"/>
</dbReference>
<dbReference type="Gene3D" id="3.60.15.10">
    <property type="entry name" value="Ribonuclease Z/Hydroxyacylglutathione hydrolase-like"/>
    <property type="match status" value="1"/>
</dbReference>
<dbReference type="InterPro" id="IPR024225">
    <property type="entry name" value="cAMP-PdiesteraseII_CS"/>
</dbReference>
<dbReference type="InterPro" id="IPR000396">
    <property type="entry name" value="Pdiesterase2"/>
</dbReference>
<dbReference type="InterPro" id="IPR036866">
    <property type="entry name" value="RibonucZ/Hydroxyglut_hydro"/>
</dbReference>
<dbReference type="PANTHER" id="PTHR28283">
    <property type="entry name" value="3',5'-CYCLIC-NUCLEOTIDE PHOSPHODIESTERASE 1"/>
    <property type="match status" value="1"/>
</dbReference>
<dbReference type="PANTHER" id="PTHR28283:SF1">
    <property type="entry name" value="3',5'-CYCLIC-NUCLEOTIDE PHOSPHODIESTERASE 1"/>
    <property type="match status" value="1"/>
</dbReference>
<dbReference type="Pfam" id="PF02112">
    <property type="entry name" value="PDEase_II"/>
    <property type="match status" value="1"/>
</dbReference>
<dbReference type="PIRSF" id="PIRSF000962">
    <property type="entry name" value="Cyc_nuc_PDEase"/>
    <property type="match status" value="1"/>
</dbReference>
<dbReference type="PRINTS" id="PR00388">
    <property type="entry name" value="PDIESTERASE2"/>
</dbReference>
<dbReference type="SUPFAM" id="SSF56281">
    <property type="entry name" value="Metallo-hydrolase/oxidoreductase"/>
    <property type="match status" value="1"/>
</dbReference>
<dbReference type="PROSITE" id="PS00607">
    <property type="entry name" value="PDEASE_II"/>
    <property type="match status" value="1"/>
</dbReference>
<evidence type="ECO:0000269" key="1">
    <source>
    </source>
</evidence>
<evidence type="ECO:0000305" key="2"/>
<evidence type="ECO:0007829" key="3">
    <source>
        <dbReference type="PDB" id="4OJV"/>
    </source>
</evidence>
<gene>
    <name type="primary">PDE1</name>
    <name type="ordered locus">YGL248W</name>
    <name type="ORF">NRB369</name>
</gene>
<name>PDE1_YEAST</name>
<proteinExistence type="evidence at protein level"/>
<organism>
    <name type="scientific">Saccharomyces cerevisiae (strain ATCC 204508 / S288c)</name>
    <name type="common">Baker's yeast</name>
    <dbReference type="NCBI Taxonomy" id="559292"/>
    <lineage>
        <taxon>Eukaryota</taxon>
        <taxon>Fungi</taxon>
        <taxon>Dikarya</taxon>
        <taxon>Ascomycota</taxon>
        <taxon>Saccharomycotina</taxon>
        <taxon>Saccharomycetes</taxon>
        <taxon>Saccharomycetales</taxon>
        <taxon>Saccharomycetaceae</taxon>
        <taxon>Saccharomyces</taxon>
    </lineage>
</organism>
<sequence length="369" mass="42016">MVVFEITILGANGGPTEYGTQCFILKPARTEDPELIAVDGGAGMYQLREMLVQGRNENEGDDELVPSFYEHDREPIEFFIDSKLNIQKGLSKSLLQSLKRQGEHFESANTMKKTYEVFQGITDYYITHPHLDHISGLVVNSPSIYEQENSKKKTIWGLPHTIDVLQKHVFNDLIWPDLTAERSRKLKLKCLNPKEVQKCTIFPWDVIPFKVHHGIGVKTGAPVYSTFYIFRDRKSKDCIIVCGDVEQDRRESEESLLEEFWSYVAENIPLVHLKGILVECSCPLSSKPEQLYGHLSPIYLINELSNLNTLYNSSKGLSGLNVIVTHVKSTPAKRDPRLTILEELRFLAEERNLGDLRISIALEGHTLFL</sequence>
<keyword id="KW-0002">3D-structure</keyword>
<keyword id="KW-0114">cAMP</keyword>
<keyword id="KW-0378">Hydrolase</keyword>
<keyword id="KW-1185">Reference proteome</keyword>
<protein>
    <recommendedName>
        <fullName>3',5'-cyclic-nucleotide phosphodiesterase 1</fullName>
        <shortName>PDEase 1</shortName>
        <ecNumber>3.1.4.17</ecNumber>
    </recommendedName>
    <alternativeName>
        <fullName>3':5'-CNP</fullName>
    </alternativeName>
    <alternativeName>
        <fullName>Low-affinity cAMP phosphodiesterase</fullName>
    </alternativeName>
</protein>
<accession>P22434</accession>
<accession>D6VV87</accession>
<reference key="1">
    <citation type="journal article" date="1987" name="Mol. Cell. Biol.">
        <title>Cloning and characterization of the low-affinity cyclic AMP phosphodiesterase gene of Saccharomyces cerevisiae.</title>
        <authorList>
            <person name="Nikawa J."/>
            <person name="Sass P."/>
            <person name="Wigler M."/>
        </authorList>
    </citation>
    <scope>NUCLEOTIDE SEQUENCE [GENOMIC DNA]</scope>
</reference>
<reference key="2">
    <citation type="journal article" date="1996" name="Yeast">
        <title>Sequence of a 39,411 bp DNA fragment covering the left end of chromosome VII of Saccharomyces cerevisiae.</title>
        <authorList>
            <person name="Coissac E."/>
            <person name="Maillier E."/>
            <person name="Robineau S."/>
            <person name="Netter P."/>
        </authorList>
    </citation>
    <scope>NUCLEOTIDE SEQUENCE [GENOMIC DNA]</scope>
    <source>
        <strain>ATCC 96604 / S288c / FY1679</strain>
    </source>
</reference>
<reference key="3">
    <citation type="journal article" date="1997" name="Nature">
        <title>The nucleotide sequence of Saccharomyces cerevisiae chromosome VII.</title>
        <authorList>
            <person name="Tettelin H."/>
            <person name="Agostoni-Carbone M.L."/>
            <person name="Albermann K."/>
            <person name="Albers M."/>
            <person name="Arroyo J."/>
            <person name="Backes U."/>
            <person name="Barreiros T."/>
            <person name="Bertani I."/>
            <person name="Bjourson A.J."/>
            <person name="Brueckner M."/>
            <person name="Bruschi C.V."/>
            <person name="Carignani G."/>
            <person name="Castagnoli L."/>
            <person name="Cerdan E."/>
            <person name="Clemente M.L."/>
            <person name="Coblenz A."/>
            <person name="Coglievina M."/>
            <person name="Coissac E."/>
            <person name="Defoor E."/>
            <person name="Del Bino S."/>
            <person name="Delius H."/>
            <person name="Delneri D."/>
            <person name="de Wergifosse P."/>
            <person name="Dujon B."/>
            <person name="Durand P."/>
            <person name="Entian K.-D."/>
            <person name="Eraso P."/>
            <person name="Escribano V."/>
            <person name="Fabiani L."/>
            <person name="Fartmann B."/>
            <person name="Feroli F."/>
            <person name="Feuermann M."/>
            <person name="Frontali L."/>
            <person name="Garcia-Gonzalez M."/>
            <person name="Garcia-Saez M.I."/>
            <person name="Goffeau A."/>
            <person name="Guerreiro P."/>
            <person name="Hani J."/>
            <person name="Hansen M."/>
            <person name="Hebling U."/>
            <person name="Hernandez K."/>
            <person name="Heumann K."/>
            <person name="Hilger F."/>
            <person name="Hofmann B."/>
            <person name="Indge K.J."/>
            <person name="James C.M."/>
            <person name="Klima R."/>
            <person name="Koetter P."/>
            <person name="Kramer B."/>
            <person name="Kramer W."/>
            <person name="Lauquin G."/>
            <person name="Leuther H."/>
            <person name="Louis E.J."/>
            <person name="Maillier E."/>
            <person name="Marconi A."/>
            <person name="Martegani E."/>
            <person name="Mazon M.J."/>
            <person name="Mazzoni C."/>
            <person name="McReynolds A.D.K."/>
            <person name="Melchioretto P."/>
            <person name="Mewes H.-W."/>
            <person name="Minenkova O."/>
            <person name="Mueller-Auer S."/>
            <person name="Nawrocki A."/>
            <person name="Netter P."/>
            <person name="Neu R."/>
            <person name="Nombela C."/>
            <person name="Oliver S.G."/>
            <person name="Panzeri L."/>
            <person name="Paoluzi S."/>
            <person name="Plevani P."/>
            <person name="Portetelle D."/>
            <person name="Portillo F."/>
            <person name="Potier S."/>
            <person name="Purnelle B."/>
            <person name="Rieger M."/>
            <person name="Riles L."/>
            <person name="Rinaldi T."/>
            <person name="Robben J."/>
            <person name="Rodrigues-Pousada C."/>
            <person name="Rodriguez-Belmonte E."/>
            <person name="Rodriguez-Torres A.M."/>
            <person name="Rose M."/>
            <person name="Ruzzi M."/>
            <person name="Saliola M."/>
            <person name="Sanchez-Perez M."/>
            <person name="Schaefer B."/>
            <person name="Schaefer M."/>
            <person name="Scharfe M."/>
            <person name="Schmidheini T."/>
            <person name="Schreer A."/>
            <person name="Skala J."/>
            <person name="Souciet J.-L."/>
            <person name="Steensma H.Y."/>
            <person name="Talla E."/>
            <person name="Thierry A."/>
            <person name="Vandenbol M."/>
            <person name="van der Aart Q.J.M."/>
            <person name="Van Dyck L."/>
            <person name="Vanoni M."/>
            <person name="Verhasselt P."/>
            <person name="Voet M."/>
            <person name="Volckaert G."/>
            <person name="Wambutt R."/>
            <person name="Watson M.D."/>
            <person name="Weber N."/>
            <person name="Wedler E."/>
            <person name="Wedler H."/>
            <person name="Wipfli P."/>
            <person name="Wolf K."/>
            <person name="Wright L.F."/>
            <person name="Zaccaria P."/>
            <person name="Zimmermann M."/>
            <person name="Zollner A."/>
            <person name="Kleine K."/>
        </authorList>
    </citation>
    <scope>NUCLEOTIDE SEQUENCE [LARGE SCALE GENOMIC DNA]</scope>
    <source>
        <strain>ATCC 204508 / S288c</strain>
    </source>
</reference>
<reference key="4">
    <citation type="journal article" date="2014" name="G3 (Bethesda)">
        <title>The reference genome sequence of Saccharomyces cerevisiae: Then and now.</title>
        <authorList>
            <person name="Engel S.R."/>
            <person name="Dietrich F.S."/>
            <person name="Fisk D.G."/>
            <person name="Binkley G."/>
            <person name="Balakrishnan R."/>
            <person name="Costanzo M.C."/>
            <person name="Dwight S.S."/>
            <person name="Hitz B.C."/>
            <person name="Karra K."/>
            <person name="Nash R.S."/>
            <person name="Weng S."/>
            <person name="Wong E.D."/>
            <person name="Lloyd P."/>
            <person name="Skrzypek M.S."/>
            <person name="Miyasato S.R."/>
            <person name="Simison M."/>
            <person name="Cherry J.M."/>
        </authorList>
    </citation>
    <scope>GENOME REANNOTATION</scope>
    <source>
        <strain>ATCC 204508 / S288c</strain>
    </source>
</reference>
<reference key="5">
    <citation type="journal article" date="2003" name="Nature">
        <title>Global analysis of protein expression in yeast.</title>
        <authorList>
            <person name="Ghaemmaghami S."/>
            <person name="Huh W.-K."/>
            <person name="Bower K."/>
            <person name="Howson R.W."/>
            <person name="Belle A."/>
            <person name="Dephoure N."/>
            <person name="O'Shea E.K."/>
            <person name="Weissman J.S."/>
        </authorList>
    </citation>
    <scope>LEVEL OF PROTEIN EXPRESSION [LARGE SCALE ANALYSIS]</scope>
</reference>
<reference key="6">
    <citation type="journal article" date="2008" name="Mol. Cell. Proteomics">
        <title>A multidimensional chromatography technology for in-depth phosphoproteome analysis.</title>
        <authorList>
            <person name="Albuquerque C.P."/>
            <person name="Smolka M.B."/>
            <person name="Payne S.H."/>
            <person name="Bafna V."/>
            <person name="Eng J."/>
            <person name="Zhou H."/>
        </authorList>
    </citation>
    <scope>IDENTIFICATION BY MASS SPECTROMETRY [LARGE SCALE ANALYSIS]</scope>
</reference>